<sequence length="656" mass="71896">MLFPTEFDVIVVGGGHAGTEAALASARMGAKTLLLTHNIETLGQMSCNPSIGGIGKGHLVKEVDALGGAMAAATDESGIQFRILNSSKGPAVRATRAQADRILYKAAIRHRLENQPNLWLFQQAVDDLMVEGDRVVGAVTQIGIRFRARAVVLTAGTFLDGKIHVGLNNYTGGRAGDPAAVSLSSRLKELKLPQGRLKTGTPPRIDGRTIDFSKLDEQPGDLDPIPVFSFLGRAEQHPQQLPCWVTHTNERTHDIIRGGLDRSPMYTGVIEGVGPRYCPSIEDKIHRFASKESHQIFLEPEGLTTHEFYPNGISTSLPFDVQLELVHSMRGLENAHILRPGYAIEYDYFDPRALKASLETKAINGLFFAGQINGTTGYEEAAAQGLLAGLNAGRYVQEKDAWCPRRDQAYLGVLVDDLVTRGVAEPYRMFTSRAEYRLSLREDNADMRLTEIGRELGLVDDARWDAFSRKRDAVSRETERLKSTWVTPKTLPAEEATALLGKAIEHEYSLAELLRRPGVSYDGVCGLKGGECGPAEPLADDPVLLEQIKEQVEIGIKYQGYIERQASEIERNDANENTRLPDGIDYREVRGLSFEVSQKLNEFRPETIGQASRISGVTPAAISLLMVHLKRRGLGRRNGKAAEAAEQGGGAVPTQQ</sequence>
<name>MNMG_BURO0</name>
<evidence type="ECO:0000255" key="1">
    <source>
        <dbReference type="HAMAP-Rule" id="MF_00129"/>
    </source>
</evidence>
<evidence type="ECO:0000256" key="2">
    <source>
        <dbReference type="SAM" id="MobiDB-lite"/>
    </source>
</evidence>
<organism>
    <name type="scientific">Burkholderia orbicola (strain MC0-3)</name>
    <dbReference type="NCBI Taxonomy" id="406425"/>
    <lineage>
        <taxon>Bacteria</taxon>
        <taxon>Pseudomonadati</taxon>
        <taxon>Pseudomonadota</taxon>
        <taxon>Betaproteobacteria</taxon>
        <taxon>Burkholderiales</taxon>
        <taxon>Burkholderiaceae</taxon>
        <taxon>Burkholderia</taxon>
        <taxon>Burkholderia cepacia complex</taxon>
        <taxon>Burkholderia orbicola</taxon>
    </lineage>
</organism>
<dbReference type="EMBL" id="CP000958">
    <property type="protein sequence ID" value="ACA89290.1"/>
    <property type="molecule type" value="Genomic_DNA"/>
</dbReference>
<dbReference type="RefSeq" id="WP_012327603.1">
    <property type="nucleotide sequence ID" value="NC_010508.1"/>
</dbReference>
<dbReference type="SMR" id="B1K1K2"/>
<dbReference type="GeneID" id="83046909"/>
<dbReference type="KEGG" id="bcm:Bcenmc03_0110"/>
<dbReference type="HOGENOM" id="CLU_007831_2_2_4"/>
<dbReference type="Proteomes" id="UP000002169">
    <property type="component" value="Chromosome 1"/>
</dbReference>
<dbReference type="GO" id="GO:0005829">
    <property type="term" value="C:cytosol"/>
    <property type="evidence" value="ECO:0007669"/>
    <property type="project" value="TreeGrafter"/>
</dbReference>
<dbReference type="GO" id="GO:0050660">
    <property type="term" value="F:flavin adenine dinucleotide binding"/>
    <property type="evidence" value="ECO:0007669"/>
    <property type="project" value="UniProtKB-UniRule"/>
</dbReference>
<dbReference type="GO" id="GO:0030488">
    <property type="term" value="P:tRNA methylation"/>
    <property type="evidence" value="ECO:0007669"/>
    <property type="project" value="TreeGrafter"/>
</dbReference>
<dbReference type="GO" id="GO:0002098">
    <property type="term" value="P:tRNA wobble uridine modification"/>
    <property type="evidence" value="ECO:0007669"/>
    <property type="project" value="InterPro"/>
</dbReference>
<dbReference type="FunFam" id="1.10.10.1800:FF:000001">
    <property type="entry name" value="tRNA uridine 5-carboxymethylaminomethyl modification enzyme MnmG"/>
    <property type="match status" value="1"/>
</dbReference>
<dbReference type="FunFam" id="1.10.150.570:FF:000001">
    <property type="entry name" value="tRNA uridine 5-carboxymethylaminomethyl modification enzyme MnmG"/>
    <property type="match status" value="1"/>
</dbReference>
<dbReference type="FunFam" id="3.50.50.60:FF:000002">
    <property type="entry name" value="tRNA uridine 5-carboxymethylaminomethyl modification enzyme MnmG"/>
    <property type="match status" value="1"/>
</dbReference>
<dbReference type="FunFam" id="3.50.50.60:FF:000010">
    <property type="entry name" value="tRNA uridine 5-carboxymethylaminomethyl modification enzyme MnmG"/>
    <property type="match status" value="1"/>
</dbReference>
<dbReference type="Gene3D" id="3.50.50.60">
    <property type="entry name" value="FAD/NAD(P)-binding domain"/>
    <property type="match status" value="2"/>
</dbReference>
<dbReference type="Gene3D" id="1.10.150.570">
    <property type="entry name" value="GidA associated domain, C-terminal subdomain"/>
    <property type="match status" value="1"/>
</dbReference>
<dbReference type="Gene3D" id="1.10.10.1800">
    <property type="entry name" value="tRNA uridine 5-carboxymethylaminomethyl modification enzyme MnmG/GidA"/>
    <property type="match status" value="1"/>
</dbReference>
<dbReference type="HAMAP" id="MF_00129">
    <property type="entry name" value="MnmG_GidA"/>
    <property type="match status" value="1"/>
</dbReference>
<dbReference type="InterPro" id="IPR036188">
    <property type="entry name" value="FAD/NAD-bd_sf"/>
</dbReference>
<dbReference type="InterPro" id="IPR049312">
    <property type="entry name" value="GIDA_C_N"/>
</dbReference>
<dbReference type="InterPro" id="IPR004416">
    <property type="entry name" value="MnmG"/>
</dbReference>
<dbReference type="InterPro" id="IPR002218">
    <property type="entry name" value="MnmG-rel"/>
</dbReference>
<dbReference type="InterPro" id="IPR020595">
    <property type="entry name" value="MnmG-rel_CS"/>
</dbReference>
<dbReference type="InterPro" id="IPR026904">
    <property type="entry name" value="MnmG_C"/>
</dbReference>
<dbReference type="InterPro" id="IPR047001">
    <property type="entry name" value="MnmG_C_subdom"/>
</dbReference>
<dbReference type="InterPro" id="IPR044920">
    <property type="entry name" value="MnmG_C_subdom_sf"/>
</dbReference>
<dbReference type="InterPro" id="IPR040131">
    <property type="entry name" value="MnmG_N"/>
</dbReference>
<dbReference type="NCBIfam" id="TIGR00136">
    <property type="entry name" value="mnmG_gidA"/>
    <property type="match status" value="1"/>
</dbReference>
<dbReference type="PANTHER" id="PTHR11806">
    <property type="entry name" value="GLUCOSE INHIBITED DIVISION PROTEIN A"/>
    <property type="match status" value="1"/>
</dbReference>
<dbReference type="PANTHER" id="PTHR11806:SF0">
    <property type="entry name" value="PROTEIN MTO1 HOMOLOG, MITOCHONDRIAL"/>
    <property type="match status" value="1"/>
</dbReference>
<dbReference type="Pfam" id="PF01134">
    <property type="entry name" value="GIDA"/>
    <property type="match status" value="1"/>
</dbReference>
<dbReference type="Pfam" id="PF21680">
    <property type="entry name" value="GIDA_C_1st"/>
    <property type="match status" value="1"/>
</dbReference>
<dbReference type="Pfam" id="PF13932">
    <property type="entry name" value="SAM_GIDA_C"/>
    <property type="match status" value="1"/>
</dbReference>
<dbReference type="SMART" id="SM01228">
    <property type="entry name" value="GIDA_assoc_3"/>
    <property type="match status" value="1"/>
</dbReference>
<dbReference type="SUPFAM" id="SSF51905">
    <property type="entry name" value="FAD/NAD(P)-binding domain"/>
    <property type="match status" value="1"/>
</dbReference>
<dbReference type="PROSITE" id="PS01280">
    <property type="entry name" value="GIDA_1"/>
    <property type="match status" value="1"/>
</dbReference>
<dbReference type="PROSITE" id="PS01281">
    <property type="entry name" value="GIDA_2"/>
    <property type="match status" value="1"/>
</dbReference>
<keyword id="KW-0963">Cytoplasm</keyword>
<keyword id="KW-0274">FAD</keyword>
<keyword id="KW-0285">Flavoprotein</keyword>
<keyword id="KW-0520">NAD</keyword>
<keyword id="KW-0819">tRNA processing</keyword>
<feature type="chain" id="PRO_0000345246" description="tRNA uridine 5-carboxymethylaminomethyl modification enzyme MnmG">
    <location>
        <begin position="1"/>
        <end position="656"/>
    </location>
</feature>
<feature type="region of interest" description="Disordered" evidence="2">
    <location>
        <begin position="636"/>
        <end position="656"/>
    </location>
</feature>
<feature type="compositionally biased region" description="Gly residues" evidence="2">
    <location>
        <begin position="647"/>
        <end position="656"/>
    </location>
</feature>
<feature type="binding site" evidence="1">
    <location>
        <begin position="13"/>
        <end position="18"/>
    </location>
    <ligand>
        <name>FAD</name>
        <dbReference type="ChEBI" id="CHEBI:57692"/>
    </ligand>
</feature>
<feature type="binding site" evidence="1">
    <location>
        <begin position="274"/>
        <end position="288"/>
    </location>
    <ligand>
        <name>NAD(+)</name>
        <dbReference type="ChEBI" id="CHEBI:57540"/>
    </ligand>
</feature>
<comment type="function">
    <text evidence="1">NAD-binding protein involved in the addition of a carboxymethylaminomethyl (cmnm) group at the wobble position (U34) of certain tRNAs, forming tRNA-cmnm(5)s(2)U34.</text>
</comment>
<comment type="cofactor">
    <cofactor evidence="1">
        <name>FAD</name>
        <dbReference type="ChEBI" id="CHEBI:57692"/>
    </cofactor>
</comment>
<comment type="subunit">
    <text evidence="1">Homodimer. Heterotetramer of two MnmE and two MnmG subunits.</text>
</comment>
<comment type="subcellular location">
    <subcellularLocation>
        <location evidence="1">Cytoplasm</location>
    </subcellularLocation>
</comment>
<comment type="similarity">
    <text evidence="1">Belongs to the MnmG family.</text>
</comment>
<reference key="1">
    <citation type="submission" date="2008-02" db="EMBL/GenBank/DDBJ databases">
        <title>Complete sequence of chromosome 1 of Burkholderia cenocepacia MC0-3.</title>
        <authorList>
            <person name="Copeland A."/>
            <person name="Lucas S."/>
            <person name="Lapidus A."/>
            <person name="Barry K."/>
            <person name="Bruce D."/>
            <person name="Goodwin L."/>
            <person name="Glavina del Rio T."/>
            <person name="Dalin E."/>
            <person name="Tice H."/>
            <person name="Pitluck S."/>
            <person name="Chain P."/>
            <person name="Malfatti S."/>
            <person name="Shin M."/>
            <person name="Vergez L."/>
            <person name="Schmutz J."/>
            <person name="Larimer F."/>
            <person name="Land M."/>
            <person name="Hauser L."/>
            <person name="Kyrpides N."/>
            <person name="Mikhailova N."/>
            <person name="Tiedje J."/>
            <person name="Richardson P."/>
        </authorList>
    </citation>
    <scope>NUCLEOTIDE SEQUENCE [LARGE SCALE GENOMIC DNA]</scope>
    <source>
        <strain>MC0-3</strain>
    </source>
</reference>
<protein>
    <recommendedName>
        <fullName evidence="1">tRNA uridine 5-carboxymethylaminomethyl modification enzyme MnmG</fullName>
    </recommendedName>
    <alternativeName>
        <fullName evidence="1">Glucose-inhibited division protein A</fullName>
    </alternativeName>
</protein>
<accession>B1K1K2</accession>
<proteinExistence type="inferred from homology"/>
<gene>
    <name evidence="1" type="primary">mnmG</name>
    <name evidence="1" type="synonym">gidA</name>
    <name type="ordered locus">Bcenmc03_0110</name>
</gene>